<feature type="chain" id="PRO_0000155356" description="Thymidylate kinase">
    <location>
        <begin position="1"/>
        <end position="241"/>
    </location>
</feature>
<feature type="binding site" evidence="1">
    <location>
        <begin position="17"/>
        <end position="24"/>
    </location>
    <ligand>
        <name>ATP</name>
        <dbReference type="ChEBI" id="CHEBI:30616"/>
    </ligand>
</feature>
<dbReference type="EC" id="2.7.4.9" evidence="1"/>
<dbReference type="EMBL" id="BA000039">
    <property type="protein sequence ID" value="BAC09607.1"/>
    <property type="molecule type" value="Genomic_DNA"/>
</dbReference>
<dbReference type="RefSeq" id="NP_682845.1">
    <property type="nucleotide sequence ID" value="NC_004113.1"/>
</dbReference>
<dbReference type="RefSeq" id="WP_011057890.1">
    <property type="nucleotide sequence ID" value="NC_004113.1"/>
</dbReference>
<dbReference type="SMR" id="Q8DHA4"/>
<dbReference type="STRING" id="197221.gene:10748664"/>
<dbReference type="EnsemblBacteria" id="BAC09607">
    <property type="protein sequence ID" value="BAC09607"/>
    <property type="gene ID" value="BAC09607"/>
</dbReference>
<dbReference type="KEGG" id="tel:tlr2055"/>
<dbReference type="PATRIC" id="fig|197221.4.peg.2150"/>
<dbReference type="eggNOG" id="COG0125">
    <property type="taxonomic scope" value="Bacteria"/>
</dbReference>
<dbReference type="Proteomes" id="UP000000440">
    <property type="component" value="Chromosome"/>
</dbReference>
<dbReference type="GO" id="GO:0005829">
    <property type="term" value="C:cytosol"/>
    <property type="evidence" value="ECO:0007669"/>
    <property type="project" value="TreeGrafter"/>
</dbReference>
<dbReference type="GO" id="GO:0005524">
    <property type="term" value="F:ATP binding"/>
    <property type="evidence" value="ECO:0007669"/>
    <property type="project" value="UniProtKB-UniRule"/>
</dbReference>
<dbReference type="GO" id="GO:0004798">
    <property type="term" value="F:dTMP kinase activity"/>
    <property type="evidence" value="ECO:0007669"/>
    <property type="project" value="UniProtKB-UniRule"/>
</dbReference>
<dbReference type="GO" id="GO:0006233">
    <property type="term" value="P:dTDP biosynthetic process"/>
    <property type="evidence" value="ECO:0007669"/>
    <property type="project" value="InterPro"/>
</dbReference>
<dbReference type="GO" id="GO:0006235">
    <property type="term" value="P:dTTP biosynthetic process"/>
    <property type="evidence" value="ECO:0007669"/>
    <property type="project" value="UniProtKB-UniRule"/>
</dbReference>
<dbReference type="GO" id="GO:0006227">
    <property type="term" value="P:dUDP biosynthetic process"/>
    <property type="evidence" value="ECO:0007669"/>
    <property type="project" value="TreeGrafter"/>
</dbReference>
<dbReference type="CDD" id="cd01672">
    <property type="entry name" value="TMPK"/>
    <property type="match status" value="1"/>
</dbReference>
<dbReference type="FunFam" id="3.40.50.300:FF:000225">
    <property type="entry name" value="Thymidylate kinase"/>
    <property type="match status" value="1"/>
</dbReference>
<dbReference type="Gene3D" id="3.40.50.300">
    <property type="entry name" value="P-loop containing nucleotide triphosphate hydrolases"/>
    <property type="match status" value="1"/>
</dbReference>
<dbReference type="HAMAP" id="MF_00165">
    <property type="entry name" value="Thymidylate_kinase"/>
    <property type="match status" value="1"/>
</dbReference>
<dbReference type="InterPro" id="IPR027417">
    <property type="entry name" value="P-loop_NTPase"/>
</dbReference>
<dbReference type="InterPro" id="IPR039430">
    <property type="entry name" value="Thymidylate_kin-like_dom"/>
</dbReference>
<dbReference type="InterPro" id="IPR018095">
    <property type="entry name" value="Thymidylate_kin_CS"/>
</dbReference>
<dbReference type="InterPro" id="IPR018094">
    <property type="entry name" value="Thymidylate_kinase"/>
</dbReference>
<dbReference type="NCBIfam" id="TIGR00041">
    <property type="entry name" value="DTMP_kinase"/>
    <property type="match status" value="1"/>
</dbReference>
<dbReference type="PANTHER" id="PTHR10344">
    <property type="entry name" value="THYMIDYLATE KINASE"/>
    <property type="match status" value="1"/>
</dbReference>
<dbReference type="PANTHER" id="PTHR10344:SF4">
    <property type="entry name" value="UMP-CMP KINASE 2, MITOCHONDRIAL"/>
    <property type="match status" value="1"/>
</dbReference>
<dbReference type="Pfam" id="PF02223">
    <property type="entry name" value="Thymidylate_kin"/>
    <property type="match status" value="1"/>
</dbReference>
<dbReference type="SUPFAM" id="SSF52540">
    <property type="entry name" value="P-loop containing nucleoside triphosphate hydrolases"/>
    <property type="match status" value="1"/>
</dbReference>
<dbReference type="PROSITE" id="PS01331">
    <property type="entry name" value="THYMIDYLATE_KINASE"/>
    <property type="match status" value="1"/>
</dbReference>
<protein>
    <recommendedName>
        <fullName evidence="1">Thymidylate kinase</fullName>
        <ecNumber evidence="1">2.7.4.9</ecNumber>
    </recommendedName>
    <alternativeName>
        <fullName evidence="1">dTMP kinase</fullName>
    </alternativeName>
</protein>
<comment type="function">
    <text evidence="1">Phosphorylation of dTMP to form dTDP in both de novo and salvage pathways of dTTP synthesis.</text>
</comment>
<comment type="catalytic activity">
    <reaction evidence="1">
        <text>dTMP + ATP = dTDP + ADP</text>
        <dbReference type="Rhea" id="RHEA:13517"/>
        <dbReference type="ChEBI" id="CHEBI:30616"/>
        <dbReference type="ChEBI" id="CHEBI:58369"/>
        <dbReference type="ChEBI" id="CHEBI:63528"/>
        <dbReference type="ChEBI" id="CHEBI:456216"/>
        <dbReference type="EC" id="2.7.4.9"/>
    </reaction>
</comment>
<comment type="similarity">
    <text evidence="1">Belongs to the thymidylate kinase family.</text>
</comment>
<sequence>MHSATHPYAGLFIVLEGGEGAGKTTQMGAIATWLENSGWLAKLRSCHVDPPLLLTREPGGTPLGQGLRQLLLHSDLAIDPLAELLLYAADRAQHVAMGIRPQLQRGGIVLCDRYTASTVAYQGYGRGLDLQIIQHINQMATGGLGADLVLWLDLPVAVGLARTQQRGRGDRLEQNAVAFHERVRQGFLALAQQGSDRWQRIDADQPPDQVTQAIQECLAAHLHRWFETLKQRLTGGDRDLP</sequence>
<name>KTHY_THEVB</name>
<gene>
    <name evidence="1" type="primary">tmk</name>
    <name type="ordered locus">tlr2055</name>
</gene>
<keyword id="KW-0067">ATP-binding</keyword>
<keyword id="KW-0418">Kinase</keyword>
<keyword id="KW-0545">Nucleotide biosynthesis</keyword>
<keyword id="KW-0547">Nucleotide-binding</keyword>
<keyword id="KW-1185">Reference proteome</keyword>
<keyword id="KW-0808">Transferase</keyword>
<reference key="1">
    <citation type="journal article" date="2002" name="DNA Res.">
        <title>Complete genome structure of the thermophilic cyanobacterium Thermosynechococcus elongatus BP-1.</title>
        <authorList>
            <person name="Nakamura Y."/>
            <person name="Kaneko T."/>
            <person name="Sato S."/>
            <person name="Ikeuchi M."/>
            <person name="Katoh H."/>
            <person name="Sasamoto S."/>
            <person name="Watanabe A."/>
            <person name="Iriguchi M."/>
            <person name="Kawashima K."/>
            <person name="Kimura T."/>
            <person name="Kishida Y."/>
            <person name="Kiyokawa C."/>
            <person name="Kohara M."/>
            <person name="Matsumoto M."/>
            <person name="Matsuno A."/>
            <person name="Nakazaki N."/>
            <person name="Shimpo S."/>
            <person name="Sugimoto M."/>
            <person name="Takeuchi C."/>
            <person name="Yamada M."/>
            <person name="Tabata S."/>
        </authorList>
    </citation>
    <scope>NUCLEOTIDE SEQUENCE [LARGE SCALE GENOMIC DNA]</scope>
    <source>
        <strain>NIES-2133 / IAM M-273 / BP-1</strain>
    </source>
</reference>
<evidence type="ECO:0000255" key="1">
    <source>
        <dbReference type="HAMAP-Rule" id="MF_00165"/>
    </source>
</evidence>
<accession>Q8DHA4</accession>
<organism>
    <name type="scientific">Thermosynechococcus vestitus (strain NIES-2133 / IAM M-273 / BP-1)</name>
    <dbReference type="NCBI Taxonomy" id="197221"/>
    <lineage>
        <taxon>Bacteria</taxon>
        <taxon>Bacillati</taxon>
        <taxon>Cyanobacteriota</taxon>
        <taxon>Cyanophyceae</taxon>
        <taxon>Acaryochloridales</taxon>
        <taxon>Thermosynechococcaceae</taxon>
        <taxon>Thermosynechococcus</taxon>
    </lineage>
</organism>
<proteinExistence type="inferred from homology"/>